<comment type="function">
    <text evidence="1">Probably functions as a manganese efflux pump.</text>
</comment>
<comment type="subcellular location">
    <subcellularLocation>
        <location evidence="1">Cell inner membrane</location>
        <topology evidence="1">Multi-pass membrane protein</topology>
    </subcellularLocation>
</comment>
<comment type="similarity">
    <text evidence="1">Belongs to the MntP (TC 9.B.29) family.</text>
</comment>
<accession>A6L3M0</accession>
<gene>
    <name evidence="1" type="primary">mntP</name>
    <name type="ordered locus">BVU_2631</name>
</gene>
<dbReference type="EMBL" id="CP000139">
    <property type="protein sequence ID" value="ABR40284.1"/>
    <property type="molecule type" value="Genomic_DNA"/>
</dbReference>
<dbReference type="RefSeq" id="WP_011965660.1">
    <property type="nucleotide sequence ID" value="NC_009614.1"/>
</dbReference>
<dbReference type="STRING" id="435590.BVU_2631"/>
<dbReference type="PaxDb" id="435590-BVU_2631"/>
<dbReference type="GeneID" id="5303594"/>
<dbReference type="KEGG" id="bvu:BVU_2631"/>
<dbReference type="PATRIC" id="fig|435590.9.peg.2711"/>
<dbReference type="eggNOG" id="COG1971">
    <property type="taxonomic scope" value="Bacteria"/>
</dbReference>
<dbReference type="HOGENOM" id="CLU_096410_3_0_10"/>
<dbReference type="BioCyc" id="BVUL435590:G1G59-2735-MONOMER"/>
<dbReference type="Proteomes" id="UP000002861">
    <property type="component" value="Chromosome"/>
</dbReference>
<dbReference type="GO" id="GO:0005886">
    <property type="term" value="C:plasma membrane"/>
    <property type="evidence" value="ECO:0007669"/>
    <property type="project" value="UniProtKB-SubCell"/>
</dbReference>
<dbReference type="GO" id="GO:0005384">
    <property type="term" value="F:manganese ion transmembrane transporter activity"/>
    <property type="evidence" value="ECO:0007669"/>
    <property type="project" value="UniProtKB-UniRule"/>
</dbReference>
<dbReference type="HAMAP" id="MF_01521">
    <property type="entry name" value="MntP_pump"/>
    <property type="match status" value="1"/>
</dbReference>
<dbReference type="InterPro" id="IPR003810">
    <property type="entry name" value="Mntp/YtaF"/>
</dbReference>
<dbReference type="InterPro" id="IPR022929">
    <property type="entry name" value="Put_MntP"/>
</dbReference>
<dbReference type="PANTHER" id="PTHR35529">
    <property type="entry name" value="MANGANESE EFFLUX PUMP MNTP-RELATED"/>
    <property type="match status" value="1"/>
</dbReference>
<dbReference type="PANTHER" id="PTHR35529:SF1">
    <property type="entry name" value="MANGANESE EFFLUX PUMP MNTP-RELATED"/>
    <property type="match status" value="1"/>
</dbReference>
<dbReference type="Pfam" id="PF02659">
    <property type="entry name" value="Mntp"/>
    <property type="match status" value="1"/>
</dbReference>
<evidence type="ECO:0000255" key="1">
    <source>
        <dbReference type="HAMAP-Rule" id="MF_01521"/>
    </source>
</evidence>
<keyword id="KW-0997">Cell inner membrane</keyword>
<keyword id="KW-1003">Cell membrane</keyword>
<keyword id="KW-0406">Ion transport</keyword>
<keyword id="KW-0464">Manganese</keyword>
<keyword id="KW-0472">Membrane</keyword>
<keyword id="KW-0812">Transmembrane</keyword>
<keyword id="KW-1133">Transmembrane helix</keyword>
<keyword id="KW-0813">Transport</keyword>
<feature type="chain" id="PRO_0000300161" description="Putative manganese efflux pump MntP">
    <location>
        <begin position="1"/>
        <end position="190"/>
    </location>
</feature>
<feature type="transmembrane region" description="Helical" evidence="1">
    <location>
        <begin position="6"/>
        <end position="26"/>
    </location>
</feature>
<feature type="transmembrane region" description="Helical" evidence="1">
    <location>
        <begin position="36"/>
        <end position="56"/>
    </location>
</feature>
<feature type="transmembrane region" description="Helical" evidence="1">
    <location>
        <begin position="61"/>
        <end position="81"/>
    </location>
</feature>
<feature type="transmembrane region" description="Helical" evidence="1">
    <location>
        <begin position="108"/>
        <end position="128"/>
    </location>
</feature>
<feature type="transmembrane region" description="Helical" evidence="1">
    <location>
        <begin position="138"/>
        <end position="158"/>
    </location>
</feature>
<feature type="transmembrane region" description="Helical" evidence="1">
    <location>
        <begin position="169"/>
        <end position="189"/>
    </location>
</feature>
<organism>
    <name type="scientific">Phocaeicola vulgatus (strain ATCC 8482 / DSM 1447 / JCM 5826 / CCUG 4940 / NBRC 14291 / NCTC 11154)</name>
    <name type="common">Bacteroides vulgatus</name>
    <dbReference type="NCBI Taxonomy" id="435590"/>
    <lineage>
        <taxon>Bacteria</taxon>
        <taxon>Pseudomonadati</taxon>
        <taxon>Bacteroidota</taxon>
        <taxon>Bacteroidia</taxon>
        <taxon>Bacteroidales</taxon>
        <taxon>Bacteroidaceae</taxon>
        <taxon>Phocaeicola</taxon>
    </lineage>
</organism>
<sequence length="190" mass="21298">MTTLEIWLLAISLAMDCFTVSITSGIIMRRICWRTFFIMAFFFGLFQAVMPLIGWFAASRFSHLIEDYDHWIAFGLLAFWGGRMIKESFSNEDKRCFDPTKLKVVVTLAIATSIDALAIGISFAFVGINSFTSILSPIVIIGFTSFVISTLGSLIGVFCGKRFNLRMELWGGLVLIIIGVKILIEHLFLS</sequence>
<reference key="1">
    <citation type="journal article" date="2007" name="PLoS Biol.">
        <title>Evolution of symbiotic bacteria in the distal human intestine.</title>
        <authorList>
            <person name="Xu J."/>
            <person name="Mahowald M.A."/>
            <person name="Ley R.E."/>
            <person name="Lozupone C.A."/>
            <person name="Hamady M."/>
            <person name="Martens E.C."/>
            <person name="Henrissat B."/>
            <person name="Coutinho P.M."/>
            <person name="Minx P."/>
            <person name="Latreille P."/>
            <person name="Cordum H."/>
            <person name="Van Brunt A."/>
            <person name="Kim K."/>
            <person name="Fulton R.S."/>
            <person name="Fulton L.A."/>
            <person name="Clifton S.W."/>
            <person name="Wilson R.K."/>
            <person name="Knight R.D."/>
            <person name="Gordon J.I."/>
        </authorList>
    </citation>
    <scope>NUCLEOTIDE SEQUENCE [LARGE SCALE GENOMIC DNA]</scope>
    <source>
        <strain>ATCC 8482 / DSM 1447 / JCM 5826 / CCUG 4940 / NBRC 14291 / NCTC 11154</strain>
    </source>
</reference>
<proteinExistence type="inferred from homology"/>
<protein>
    <recommendedName>
        <fullName evidence="1">Putative manganese efflux pump MntP</fullName>
    </recommendedName>
</protein>
<name>MNTP_PHOV8</name>